<protein>
    <recommendedName>
        <fullName>CD99 antigen-like protein 2</fullName>
    </recommendedName>
    <cdAntigenName>CD99</cdAntigenName>
</protein>
<gene>
    <name type="primary">cd99l2</name>
</gene>
<evidence type="ECO:0000250" key="1"/>
<evidence type="ECO:0000255" key="2"/>
<evidence type="ECO:0000256" key="3">
    <source>
        <dbReference type="SAM" id="MobiDB-lite"/>
    </source>
</evidence>
<evidence type="ECO:0000269" key="4">
    <source>
    </source>
</evidence>
<evidence type="ECO:0000303" key="5">
    <source>
    </source>
</evidence>
<evidence type="ECO:0000305" key="6"/>
<dbReference type="EMBL" id="AY078168">
    <property type="protein sequence ID" value="AAL86620.1"/>
    <property type="molecule type" value="mRNA"/>
</dbReference>
<dbReference type="EMBL" id="BC078330">
    <property type="protein sequence ID" value="AAH78330.1"/>
    <property type="molecule type" value="mRNA"/>
</dbReference>
<dbReference type="RefSeq" id="NP_001315453.1">
    <molecule id="Q6DBW9-1"/>
    <property type="nucleotide sequence ID" value="NM_001328524.1"/>
</dbReference>
<dbReference type="RefSeq" id="NP_919350.2">
    <molecule id="Q6DBW9-2"/>
    <property type="nucleotide sequence ID" value="NM_194369.2"/>
</dbReference>
<dbReference type="FunCoup" id="Q6DBW9">
    <property type="interactions" value="2737"/>
</dbReference>
<dbReference type="STRING" id="7955.ENSDARP00000073691"/>
<dbReference type="Ensembl" id="ENSDART00000079235">
    <molecule id="Q6DBW9-1"/>
    <property type="protein sequence ID" value="ENSDARP00000073691"/>
    <property type="gene ID" value="ENSDARG00000056722"/>
</dbReference>
<dbReference type="GeneID" id="323266"/>
<dbReference type="KEGG" id="dre:323266"/>
<dbReference type="AGR" id="ZFIN:ZDB-GENE-030131-1986"/>
<dbReference type="CTD" id="83692"/>
<dbReference type="ZFIN" id="ZDB-GENE-030131-1986">
    <property type="gene designation" value="cd99l2"/>
</dbReference>
<dbReference type="HOGENOM" id="CLU_092825_0_1_1"/>
<dbReference type="InParanoid" id="Q6DBW9"/>
<dbReference type="OrthoDB" id="8961553at2759"/>
<dbReference type="PhylomeDB" id="Q6DBW9"/>
<dbReference type="PRO" id="PR:Q6DBW9"/>
<dbReference type="Proteomes" id="UP000000437">
    <property type="component" value="Chromosome 7"/>
</dbReference>
<dbReference type="Bgee" id="ENSDARG00000056722">
    <property type="expression patterns" value="Expressed in somite and 46 other cell types or tissues"/>
</dbReference>
<dbReference type="ExpressionAtlas" id="Q6DBW9">
    <property type="expression patterns" value="baseline and differential"/>
</dbReference>
<dbReference type="GO" id="GO:0070161">
    <property type="term" value="C:anchoring junction"/>
    <property type="evidence" value="ECO:0007669"/>
    <property type="project" value="UniProtKB-SubCell"/>
</dbReference>
<dbReference type="GO" id="GO:0005886">
    <property type="term" value="C:plasma membrane"/>
    <property type="evidence" value="ECO:0007669"/>
    <property type="project" value="UniProtKB-SubCell"/>
</dbReference>
<dbReference type="GO" id="GO:0007155">
    <property type="term" value="P:cell adhesion"/>
    <property type="evidence" value="ECO:0007669"/>
    <property type="project" value="UniProtKB-KW"/>
</dbReference>
<dbReference type="InterPro" id="IPR022078">
    <property type="entry name" value="CD99L2"/>
</dbReference>
<dbReference type="PANTHER" id="PTHR15076:SF12">
    <property type="entry name" value="CD99 ANTIGEN-LIKE PROTEIN 2"/>
    <property type="match status" value="1"/>
</dbReference>
<dbReference type="PANTHER" id="PTHR15076">
    <property type="entry name" value="CD99/MIC2 PROTEIN RELATED"/>
    <property type="match status" value="1"/>
</dbReference>
<dbReference type="Pfam" id="PF12301">
    <property type="entry name" value="CD99L2"/>
    <property type="match status" value="1"/>
</dbReference>
<feature type="signal peptide" evidence="2">
    <location>
        <begin position="1"/>
        <end position="23"/>
    </location>
</feature>
<feature type="chain" id="PRO_0000340096" description="CD99 antigen-like protein 2">
    <location>
        <begin position="24"/>
        <end position="252"/>
    </location>
</feature>
<feature type="transmembrane region" description="Helical" evidence="2">
    <location>
        <begin position="178"/>
        <end position="198"/>
    </location>
</feature>
<feature type="region of interest" description="Disordered" evidence="3">
    <location>
        <begin position="30"/>
        <end position="170"/>
    </location>
</feature>
<feature type="compositionally biased region" description="Low complexity" evidence="3">
    <location>
        <begin position="57"/>
        <end position="68"/>
    </location>
</feature>
<feature type="compositionally biased region" description="Basic and acidic residues" evidence="3">
    <location>
        <begin position="96"/>
        <end position="120"/>
    </location>
</feature>
<feature type="splice variant" id="VSP_034187" description="In isoform 2." evidence="5">
    <location>
        <begin position="109"/>
        <end position="125"/>
    </location>
</feature>
<feature type="sequence conflict" description="In Ref. 1; AAL86620." evidence="6" ref="1">
    <original>M</original>
    <variation>L</variation>
    <location>
        <position position="22"/>
    </location>
</feature>
<organism>
    <name type="scientific">Danio rerio</name>
    <name type="common">Zebrafish</name>
    <name type="synonym">Brachydanio rerio</name>
    <dbReference type="NCBI Taxonomy" id="7955"/>
    <lineage>
        <taxon>Eukaryota</taxon>
        <taxon>Metazoa</taxon>
        <taxon>Chordata</taxon>
        <taxon>Craniata</taxon>
        <taxon>Vertebrata</taxon>
        <taxon>Euteleostomi</taxon>
        <taxon>Actinopterygii</taxon>
        <taxon>Neopterygii</taxon>
        <taxon>Teleostei</taxon>
        <taxon>Ostariophysi</taxon>
        <taxon>Cypriniformes</taxon>
        <taxon>Danionidae</taxon>
        <taxon>Danioninae</taxon>
        <taxon>Danio</taxon>
    </lineage>
</organism>
<sequence>MEKTLWTWTLLAVFSLLVVKGMSDGLDLADALGDDDDDEPTTKPPKADPGAGGAGGAAVKPTLKPVKPTVKEPAKPKPKQTGLDDFDLADALNPDNDIKGKGKDSGKGDKEVGGGSRDDGTPNSRGSQFSDDDLLDVGNDNSYKPDKGKGGKGGSSSNVGDLDPADDNNYDTMAETGTIAGIVSAVAMALVGAVSSYISYQKKKLCFSIQQSLNADMVKADAPDAVVAQEPQVQQTLLQPPNAEPPTEENAV</sequence>
<reference key="1">
    <citation type="journal article" date="2003" name="Gene">
        <title>Cloning, genomic organization, alternative transcripts and expression analysis of CD99L2, a novel paralog of human CD99, and identification of evolutionary conserved motifs.</title>
        <authorList>
            <person name="Suh Y.H."/>
            <person name="Shin Y.K."/>
            <person name="Kook M.-C."/>
            <person name="Oh K.I."/>
            <person name="Park W.S."/>
            <person name="Kim S.H."/>
            <person name="Lee I.-S."/>
            <person name="Park H.J."/>
            <person name="Huh T.-L."/>
            <person name="Park S.H."/>
        </authorList>
    </citation>
    <scope>NUCLEOTIDE SEQUENCE [MRNA] (ISOFORM 2)</scope>
    <scope>DEVELOPMENTAL STAGE</scope>
</reference>
<reference key="2">
    <citation type="submission" date="2004-07" db="EMBL/GenBank/DDBJ databases">
        <authorList>
            <consortium name="NIH - Zebrafish Gene Collection (ZGC) project"/>
        </authorList>
    </citation>
    <scope>NUCLEOTIDE SEQUENCE [LARGE SCALE MRNA] (ISOFORM 1)</scope>
    <source>
        <tissue>Embryo</tissue>
    </source>
</reference>
<comment type="function">
    <text evidence="1">May function as a homophilic adhesion molecule.</text>
</comment>
<comment type="subcellular location">
    <subcellularLocation>
        <location evidence="1">Cell membrane</location>
        <topology evidence="1">Single-pass type I membrane protein</topology>
        <orientation evidence="1">Extracellular side</orientation>
    </subcellularLocation>
    <subcellularLocation>
        <location evidence="1">Cell junction</location>
    </subcellularLocation>
</comment>
<comment type="alternative products">
    <event type="alternative splicing"/>
    <isoform>
        <id>Q6DBW9-1</id>
        <name>1</name>
        <sequence type="displayed"/>
    </isoform>
    <isoform>
        <id>Q6DBW9-2</id>
        <name>2</name>
        <sequence type="described" ref="VSP_034187"/>
    </isoform>
</comment>
<comment type="developmental stage">
    <text evidence="4">Expressed in the dorsal region of the neural keel as somatogenesis proceeds before 25 hpf. At 25 hpf, expression is highest in the neural plate, in the brain including telencephalon, diencephalon, tectum and the rhombomere boundary. Highly expressed in lens, germinal ganglion, otic capsule and rhombomeres 2-7. Weakly expressed in trunk and tail. Expression is particularly high in otic capsule at 48 hpf.</text>
</comment>
<comment type="similarity">
    <text evidence="6">Belongs to the CD99 family.</text>
</comment>
<keyword id="KW-0025">Alternative splicing</keyword>
<keyword id="KW-0130">Cell adhesion</keyword>
<keyword id="KW-0965">Cell junction</keyword>
<keyword id="KW-1003">Cell membrane</keyword>
<keyword id="KW-0472">Membrane</keyword>
<keyword id="KW-1185">Reference proteome</keyword>
<keyword id="KW-0732">Signal</keyword>
<keyword id="KW-0812">Transmembrane</keyword>
<keyword id="KW-1133">Transmembrane helix</keyword>
<accession>Q6DBW9</accession>
<accession>Q8QFW9</accession>
<name>C99L2_DANRE</name>
<proteinExistence type="evidence at transcript level"/>